<organism>
    <name type="scientific">Histophilus somni (strain 129Pt)</name>
    <name type="common">Haemophilus somnus</name>
    <dbReference type="NCBI Taxonomy" id="205914"/>
    <lineage>
        <taxon>Bacteria</taxon>
        <taxon>Pseudomonadati</taxon>
        <taxon>Pseudomonadota</taxon>
        <taxon>Gammaproteobacteria</taxon>
        <taxon>Pasteurellales</taxon>
        <taxon>Pasteurellaceae</taxon>
        <taxon>Histophilus</taxon>
    </lineage>
</organism>
<evidence type="ECO:0000255" key="1">
    <source>
        <dbReference type="HAMAP-Rule" id="MF_00281"/>
    </source>
</evidence>
<keyword id="KW-0030">Aminoacyl-tRNA synthetase</keyword>
<keyword id="KW-0067">ATP-binding</keyword>
<keyword id="KW-0963">Cytoplasm</keyword>
<keyword id="KW-0436">Ligase</keyword>
<keyword id="KW-0460">Magnesium</keyword>
<keyword id="KW-0479">Metal-binding</keyword>
<keyword id="KW-0547">Nucleotide-binding</keyword>
<keyword id="KW-0648">Protein biosynthesis</keyword>
<protein>
    <recommendedName>
        <fullName evidence="1">Phenylalanine--tRNA ligase alpha subunit</fullName>
        <ecNumber evidence="1">6.1.1.20</ecNumber>
    </recommendedName>
    <alternativeName>
        <fullName evidence="1">Phenylalanyl-tRNA synthetase alpha subunit</fullName>
        <shortName evidence="1">PheRS</shortName>
    </alternativeName>
</protein>
<accession>Q0I3K7</accession>
<comment type="catalytic activity">
    <reaction evidence="1">
        <text>tRNA(Phe) + L-phenylalanine + ATP = L-phenylalanyl-tRNA(Phe) + AMP + diphosphate + H(+)</text>
        <dbReference type="Rhea" id="RHEA:19413"/>
        <dbReference type="Rhea" id="RHEA-COMP:9668"/>
        <dbReference type="Rhea" id="RHEA-COMP:9699"/>
        <dbReference type="ChEBI" id="CHEBI:15378"/>
        <dbReference type="ChEBI" id="CHEBI:30616"/>
        <dbReference type="ChEBI" id="CHEBI:33019"/>
        <dbReference type="ChEBI" id="CHEBI:58095"/>
        <dbReference type="ChEBI" id="CHEBI:78442"/>
        <dbReference type="ChEBI" id="CHEBI:78531"/>
        <dbReference type="ChEBI" id="CHEBI:456215"/>
        <dbReference type="EC" id="6.1.1.20"/>
    </reaction>
</comment>
<comment type="cofactor">
    <cofactor evidence="1">
        <name>Mg(2+)</name>
        <dbReference type="ChEBI" id="CHEBI:18420"/>
    </cofactor>
    <text evidence="1">Binds 2 magnesium ions per tetramer.</text>
</comment>
<comment type="subunit">
    <text evidence="1">Tetramer of two alpha and two beta subunits.</text>
</comment>
<comment type="subcellular location">
    <subcellularLocation>
        <location evidence="1">Cytoplasm</location>
    </subcellularLocation>
</comment>
<comment type="similarity">
    <text evidence="1">Belongs to the class-II aminoacyl-tRNA synthetase family. Phe-tRNA synthetase alpha subunit type 1 subfamily.</text>
</comment>
<gene>
    <name evidence="1" type="primary">pheS</name>
    <name type="ordered locus">HS_0859</name>
</gene>
<reference key="1">
    <citation type="journal article" date="2007" name="J. Bacteriol.">
        <title>Complete genome sequence of Haemophilus somnus (Histophilus somni) strain 129Pt and comparison to Haemophilus ducreyi 35000HP and Haemophilus influenzae Rd.</title>
        <authorList>
            <person name="Challacombe J.F."/>
            <person name="Duncan A.J."/>
            <person name="Brettin T.S."/>
            <person name="Bruce D."/>
            <person name="Chertkov O."/>
            <person name="Detter J.C."/>
            <person name="Han C.S."/>
            <person name="Misra M."/>
            <person name="Richardson P."/>
            <person name="Tapia R."/>
            <person name="Thayer N."/>
            <person name="Xie G."/>
            <person name="Inzana T.J."/>
        </authorList>
    </citation>
    <scope>NUCLEOTIDE SEQUENCE [LARGE SCALE GENOMIC DNA]</scope>
    <source>
        <strain>129Pt</strain>
    </source>
</reference>
<feature type="chain" id="PRO_1000006839" description="Phenylalanine--tRNA ligase alpha subunit">
    <location>
        <begin position="1"/>
        <end position="329"/>
    </location>
</feature>
<feature type="binding site" evidence="1">
    <location>
        <position position="254"/>
    </location>
    <ligand>
        <name>Mg(2+)</name>
        <dbReference type="ChEBI" id="CHEBI:18420"/>
        <note>shared with beta subunit</note>
    </ligand>
</feature>
<dbReference type="EC" id="6.1.1.20" evidence="1"/>
<dbReference type="EMBL" id="CP000436">
    <property type="protein sequence ID" value="ABI25134.1"/>
    <property type="molecule type" value="Genomic_DNA"/>
</dbReference>
<dbReference type="SMR" id="Q0I3K7"/>
<dbReference type="KEGG" id="hso:HS_0859"/>
<dbReference type="eggNOG" id="COG0016">
    <property type="taxonomic scope" value="Bacteria"/>
</dbReference>
<dbReference type="HOGENOM" id="CLU_025086_0_1_6"/>
<dbReference type="GO" id="GO:0005737">
    <property type="term" value="C:cytoplasm"/>
    <property type="evidence" value="ECO:0007669"/>
    <property type="project" value="UniProtKB-SubCell"/>
</dbReference>
<dbReference type="GO" id="GO:0005524">
    <property type="term" value="F:ATP binding"/>
    <property type="evidence" value="ECO:0007669"/>
    <property type="project" value="UniProtKB-UniRule"/>
</dbReference>
<dbReference type="GO" id="GO:0000287">
    <property type="term" value="F:magnesium ion binding"/>
    <property type="evidence" value="ECO:0007669"/>
    <property type="project" value="UniProtKB-UniRule"/>
</dbReference>
<dbReference type="GO" id="GO:0004826">
    <property type="term" value="F:phenylalanine-tRNA ligase activity"/>
    <property type="evidence" value="ECO:0007669"/>
    <property type="project" value="UniProtKB-UniRule"/>
</dbReference>
<dbReference type="GO" id="GO:0000049">
    <property type="term" value="F:tRNA binding"/>
    <property type="evidence" value="ECO:0007669"/>
    <property type="project" value="InterPro"/>
</dbReference>
<dbReference type="GO" id="GO:0006432">
    <property type="term" value="P:phenylalanyl-tRNA aminoacylation"/>
    <property type="evidence" value="ECO:0007669"/>
    <property type="project" value="UniProtKB-UniRule"/>
</dbReference>
<dbReference type="CDD" id="cd00496">
    <property type="entry name" value="PheRS_alpha_core"/>
    <property type="match status" value="1"/>
</dbReference>
<dbReference type="FunFam" id="3.30.930.10:FF:000003">
    <property type="entry name" value="Phenylalanine--tRNA ligase alpha subunit"/>
    <property type="match status" value="1"/>
</dbReference>
<dbReference type="Gene3D" id="3.30.930.10">
    <property type="entry name" value="Bira Bifunctional Protein, Domain 2"/>
    <property type="match status" value="1"/>
</dbReference>
<dbReference type="HAMAP" id="MF_00281">
    <property type="entry name" value="Phe_tRNA_synth_alpha1"/>
    <property type="match status" value="1"/>
</dbReference>
<dbReference type="InterPro" id="IPR006195">
    <property type="entry name" value="aa-tRNA-synth_II"/>
</dbReference>
<dbReference type="InterPro" id="IPR045864">
    <property type="entry name" value="aa-tRNA-synth_II/BPL/LPL"/>
</dbReference>
<dbReference type="InterPro" id="IPR004529">
    <property type="entry name" value="Phe-tRNA-synth_IIc_asu"/>
</dbReference>
<dbReference type="InterPro" id="IPR004188">
    <property type="entry name" value="Phe-tRNA_ligase_II_N"/>
</dbReference>
<dbReference type="InterPro" id="IPR022911">
    <property type="entry name" value="Phe_tRNA_ligase_alpha1_bac"/>
</dbReference>
<dbReference type="InterPro" id="IPR002319">
    <property type="entry name" value="Phenylalanyl-tRNA_Synthase"/>
</dbReference>
<dbReference type="InterPro" id="IPR010978">
    <property type="entry name" value="tRNA-bd_arm"/>
</dbReference>
<dbReference type="NCBIfam" id="TIGR00468">
    <property type="entry name" value="pheS"/>
    <property type="match status" value="1"/>
</dbReference>
<dbReference type="PANTHER" id="PTHR11538:SF41">
    <property type="entry name" value="PHENYLALANINE--TRNA LIGASE, MITOCHONDRIAL"/>
    <property type="match status" value="1"/>
</dbReference>
<dbReference type="PANTHER" id="PTHR11538">
    <property type="entry name" value="PHENYLALANYL-TRNA SYNTHETASE"/>
    <property type="match status" value="1"/>
</dbReference>
<dbReference type="Pfam" id="PF02912">
    <property type="entry name" value="Phe_tRNA-synt_N"/>
    <property type="match status" value="1"/>
</dbReference>
<dbReference type="Pfam" id="PF01409">
    <property type="entry name" value="tRNA-synt_2d"/>
    <property type="match status" value="1"/>
</dbReference>
<dbReference type="SUPFAM" id="SSF55681">
    <property type="entry name" value="Class II aaRS and biotin synthetases"/>
    <property type="match status" value="1"/>
</dbReference>
<dbReference type="SUPFAM" id="SSF46589">
    <property type="entry name" value="tRNA-binding arm"/>
    <property type="match status" value="1"/>
</dbReference>
<dbReference type="PROSITE" id="PS50862">
    <property type="entry name" value="AA_TRNA_LIGASE_II"/>
    <property type="match status" value="1"/>
</dbReference>
<sequence length="329" mass="38023">MYNLQEITEKARKAIDALQDNSIESLEAIRVEYFGKKGHFTQLMQGLRDVSAEERPAVGAKINEAKQKVQAILNAKKVEWEEIALNERLAQERIDVSLPGRKMELGGLHPVSITINRVVQFFSKLGFTVEIGPEIETDYYNFDALNIPKHHPARADHDTFWFDAERLLRTQTSGVQIRTMEKMCPPIRIMAPGKVYRNDYDQTHTPMFHQIELLYVDKKANFTELKGLLHDFLRAFFEEDLQVRFRPSYFPFTEPSAEVDVMGKNGKWLEVLGCGMVHPNVLRNVGIDPNEYSGFAVGMGVERLTMLRYNVTDLRSFFENDLRFLKQFK</sequence>
<name>SYFA_HISS1</name>
<proteinExistence type="inferred from homology"/>